<gene>
    <name type="primary">APC11</name>
    <name type="ordered locus">YDL008W</name>
    <name type="ORF">D2900</name>
</gene>
<organism>
    <name type="scientific">Saccharomyces cerevisiae (strain ATCC 204508 / S288c)</name>
    <name type="common">Baker's yeast</name>
    <dbReference type="NCBI Taxonomy" id="559292"/>
    <lineage>
        <taxon>Eukaryota</taxon>
        <taxon>Fungi</taxon>
        <taxon>Dikarya</taxon>
        <taxon>Ascomycota</taxon>
        <taxon>Saccharomycotina</taxon>
        <taxon>Saccharomycetes</taxon>
        <taxon>Saccharomycetales</taxon>
        <taxon>Saccharomycetaceae</taxon>
        <taxon>Saccharomyces</taxon>
    </lineage>
</organism>
<protein>
    <recommendedName>
        <fullName>Anaphase-promoting complex subunit 11</fullName>
        <ecNumber>6.3.2.-</ecNumber>
    </recommendedName>
</protein>
<proteinExistence type="evidence at protein level"/>
<feature type="chain" id="PRO_0000055751" description="Anaphase-promoting complex subunit 11">
    <location>
        <begin position="1"/>
        <end position="165"/>
    </location>
</feature>
<feature type="zinc finger region" description="RING-type; atypical" evidence="1">
    <location>
        <begin position="52"/>
        <end position="95"/>
    </location>
</feature>
<feature type="mutagenesis site" description="In APC11-13; G2/M cell cycle arrest at 37 degrees Celsius." evidence="2">
    <original>S</original>
    <variation>R</variation>
    <location>
        <position position="10"/>
    </location>
</feature>
<feature type="mutagenesis site" description="Loss of function." evidence="2">
    <original>C</original>
    <variation>A</variation>
    <location>
        <position position="41"/>
    </location>
</feature>
<feature type="mutagenesis site" description="Loss of function." evidence="2">
    <original>C</original>
    <variation>A</variation>
    <location>
        <position position="44"/>
    </location>
</feature>
<feature type="mutagenesis site" description="Loss of function." evidence="2">
    <original>W</original>
    <variation>A</variation>
    <location>
        <position position="81"/>
    </location>
</feature>
<feature type="mutagenesis site" description="Loss of function." evidence="2">
    <original>C</original>
    <variation>A</variation>
    <location>
        <position position="91"/>
    </location>
</feature>
<feature type="strand" evidence="5">
    <location>
        <begin position="2"/>
        <end position="16"/>
    </location>
</feature>
<feature type="turn" evidence="5">
    <location>
        <begin position="42"/>
        <end position="44"/>
    </location>
</feature>
<feature type="strand" evidence="5">
    <location>
        <begin position="64"/>
        <end position="67"/>
    </location>
</feature>
<feature type="strand" evidence="5">
    <location>
        <begin position="72"/>
        <end position="74"/>
    </location>
</feature>
<feature type="helix" evidence="5">
    <location>
        <begin position="75"/>
        <end position="82"/>
    </location>
</feature>
<feature type="turn" evidence="5">
    <location>
        <begin position="85"/>
        <end position="89"/>
    </location>
</feature>
<feature type="turn" evidence="5">
    <location>
        <begin position="92"/>
        <end position="94"/>
    </location>
</feature>
<feature type="turn" evidence="5">
    <location>
        <begin position="105"/>
        <end position="107"/>
    </location>
</feature>
<feature type="helix" evidence="5">
    <location>
        <begin position="108"/>
        <end position="110"/>
    </location>
</feature>
<feature type="helix" evidence="5">
    <location>
        <begin position="111"/>
        <end position="127"/>
    </location>
</feature>
<evidence type="ECO:0000255" key="1">
    <source>
        <dbReference type="PROSITE-ProRule" id="PRU00175"/>
    </source>
</evidence>
<evidence type="ECO:0000269" key="2">
    <source>
    </source>
</evidence>
<evidence type="ECO:0000269" key="3">
    <source>
    </source>
</evidence>
<evidence type="ECO:0000269" key="4">
    <source>
    </source>
</evidence>
<evidence type="ECO:0007829" key="5">
    <source>
        <dbReference type="PDB" id="8A3T"/>
    </source>
</evidence>
<accession>Q12157</accession>
<accession>D6VRX9</accession>
<comment type="function">
    <text evidence="2">Probably catalytic subunit of the anaphase promoting complex/cyclosome (APC/C), a cell cycle-regulated E3 ubiquitin-protein ligase complex that controls progression through mitosis and the G1 phase of the cell cycle. The APC/C is thought to confer substrate specificity and, in the presence of ubiquitin-conjugating E2 enzymes, it catalyzes the formation of protein-ubiquitin conjugates that are subsequently degraded by the 26S proteasome. In early mitosis, the APC/C is activated by CDC20 and targets securin PDS1, the B-type cyclin CLB5, and other anaphase inhibitory proteins for proteolysis, thereby triggering the separation of sister chromatids at the metaphase-to-anaphase transition. In late mitosis and in G1, degradation of CLB5 allows activation of the APC/C by CDH1, which is needed to destroy CDC20 and the B-type cyclin CLB2 to allow exit from mitosis and creating the low CDK state necessary for cytokinesis and for reforming prereplicative complexes in G1 prior to another round of replication. APC11 is required to recruit the ubiquitin-conjugating enzyme E2 to the APC/C.</text>
</comment>
<comment type="pathway">
    <text>Protein modification; protein ubiquitination.</text>
</comment>
<comment type="subunit">
    <text evidence="4">The APC/C is composed of at least 13 subunits that stay tightly associated throughout the cell cycle: APC1, APC2, APC4, APC5, APC9, APC11, CDC16, CDC23, CDC26, CDC27, DOC1, MND2 and SWM1.</text>
</comment>
<comment type="miscellaneous">
    <text evidence="3">Present with 377 molecules/cell in log phase SD medium.</text>
</comment>
<keyword id="KW-0002">3D-structure</keyword>
<keyword id="KW-0131">Cell cycle</keyword>
<keyword id="KW-0132">Cell division</keyword>
<keyword id="KW-0436">Ligase</keyword>
<keyword id="KW-0479">Metal-binding</keyword>
<keyword id="KW-0498">Mitosis</keyword>
<keyword id="KW-1185">Reference proteome</keyword>
<keyword id="KW-0833">Ubl conjugation pathway</keyword>
<keyword id="KW-0862">Zinc</keyword>
<keyword id="KW-0863">Zinc-finger</keyword>
<reference key="1">
    <citation type="journal article" date="1997" name="Nature">
        <title>The nucleotide sequence of Saccharomyces cerevisiae chromosome IV.</title>
        <authorList>
            <person name="Jacq C."/>
            <person name="Alt-Moerbe J."/>
            <person name="Andre B."/>
            <person name="Arnold W."/>
            <person name="Bahr A."/>
            <person name="Ballesta J.P.G."/>
            <person name="Bargues M."/>
            <person name="Baron L."/>
            <person name="Becker A."/>
            <person name="Biteau N."/>
            <person name="Bloecker H."/>
            <person name="Blugeon C."/>
            <person name="Boskovic J."/>
            <person name="Brandt P."/>
            <person name="Brueckner M."/>
            <person name="Buitrago M.J."/>
            <person name="Coster F."/>
            <person name="Delaveau T."/>
            <person name="del Rey F."/>
            <person name="Dujon B."/>
            <person name="Eide L.G."/>
            <person name="Garcia-Cantalejo J.M."/>
            <person name="Goffeau A."/>
            <person name="Gomez-Peris A."/>
            <person name="Granotier C."/>
            <person name="Hanemann V."/>
            <person name="Hankeln T."/>
            <person name="Hoheisel J.D."/>
            <person name="Jaeger W."/>
            <person name="Jimenez A."/>
            <person name="Jonniaux J.-L."/>
            <person name="Kraemer C."/>
            <person name="Kuester H."/>
            <person name="Laamanen P."/>
            <person name="Legros Y."/>
            <person name="Louis E.J."/>
            <person name="Moeller-Rieker S."/>
            <person name="Monnet A."/>
            <person name="Moro M."/>
            <person name="Mueller-Auer S."/>
            <person name="Nussbaumer B."/>
            <person name="Paricio N."/>
            <person name="Paulin L."/>
            <person name="Perea J."/>
            <person name="Perez-Alonso M."/>
            <person name="Perez-Ortin J.E."/>
            <person name="Pohl T.M."/>
            <person name="Prydz H."/>
            <person name="Purnelle B."/>
            <person name="Rasmussen S.W."/>
            <person name="Remacha M.A."/>
            <person name="Revuelta J.L."/>
            <person name="Rieger M."/>
            <person name="Salom D."/>
            <person name="Saluz H.P."/>
            <person name="Saiz J.E."/>
            <person name="Saren A.-M."/>
            <person name="Schaefer M."/>
            <person name="Scharfe M."/>
            <person name="Schmidt E.R."/>
            <person name="Schneider C."/>
            <person name="Scholler P."/>
            <person name="Schwarz S."/>
            <person name="Soler-Mira A."/>
            <person name="Urrestarazu L.A."/>
            <person name="Verhasselt P."/>
            <person name="Vissers S."/>
            <person name="Voet M."/>
            <person name="Volckaert G."/>
            <person name="Wagner G."/>
            <person name="Wambutt R."/>
            <person name="Wedler E."/>
            <person name="Wedler H."/>
            <person name="Woelfl S."/>
            <person name="Harris D.E."/>
            <person name="Bowman S."/>
            <person name="Brown D."/>
            <person name="Churcher C.M."/>
            <person name="Connor R."/>
            <person name="Dedman K."/>
            <person name="Gentles S."/>
            <person name="Hamlin N."/>
            <person name="Hunt S."/>
            <person name="Jones L."/>
            <person name="McDonald S."/>
            <person name="Murphy L.D."/>
            <person name="Niblett D."/>
            <person name="Odell C."/>
            <person name="Oliver K."/>
            <person name="Rajandream M.A."/>
            <person name="Richards C."/>
            <person name="Shore L."/>
            <person name="Walsh S.V."/>
            <person name="Barrell B.G."/>
            <person name="Dietrich F.S."/>
            <person name="Mulligan J.T."/>
            <person name="Allen E."/>
            <person name="Araujo R."/>
            <person name="Aviles E."/>
            <person name="Berno A."/>
            <person name="Carpenter J."/>
            <person name="Chen E."/>
            <person name="Cherry J.M."/>
            <person name="Chung E."/>
            <person name="Duncan M."/>
            <person name="Hunicke-Smith S."/>
            <person name="Hyman R.W."/>
            <person name="Komp C."/>
            <person name="Lashkari D."/>
            <person name="Lew H."/>
            <person name="Lin D."/>
            <person name="Mosedale D."/>
            <person name="Nakahara K."/>
            <person name="Namath A."/>
            <person name="Oefner P."/>
            <person name="Oh C."/>
            <person name="Petel F.X."/>
            <person name="Roberts D."/>
            <person name="Schramm S."/>
            <person name="Schroeder M."/>
            <person name="Shogren T."/>
            <person name="Shroff N."/>
            <person name="Winant A."/>
            <person name="Yelton M.A."/>
            <person name="Botstein D."/>
            <person name="Davis R.W."/>
            <person name="Johnston M."/>
            <person name="Andrews S."/>
            <person name="Brinkman R."/>
            <person name="Cooper J."/>
            <person name="Ding H."/>
            <person name="Du Z."/>
            <person name="Favello A."/>
            <person name="Fulton L."/>
            <person name="Gattung S."/>
            <person name="Greco T."/>
            <person name="Hallsworth K."/>
            <person name="Hawkins J."/>
            <person name="Hillier L.W."/>
            <person name="Jier M."/>
            <person name="Johnson D."/>
            <person name="Johnston L."/>
            <person name="Kirsten J."/>
            <person name="Kucaba T."/>
            <person name="Langston Y."/>
            <person name="Latreille P."/>
            <person name="Le T."/>
            <person name="Mardis E."/>
            <person name="Menezes S."/>
            <person name="Miller N."/>
            <person name="Nhan M."/>
            <person name="Pauley A."/>
            <person name="Peluso D."/>
            <person name="Rifkin L."/>
            <person name="Riles L."/>
            <person name="Taich A."/>
            <person name="Trevaskis E."/>
            <person name="Vignati D."/>
            <person name="Wilcox L."/>
            <person name="Wohldman P."/>
            <person name="Vaudin M."/>
            <person name="Wilson R."/>
            <person name="Waterston R."/>
            <person name="Albermann K."/>
            <person name="Hani J."/>
            <person name="Heumann K."/>
            <person name="Kleine K."/>
            <person name="Mewes H.-W."/>
            <person name="Zollner A."/>
            <person name="Zaccaria P."/>
        </authorList>
    </citation>
    <scope>NUCLEOTIDE SEQUENCE [LARGE SCALE GENOMIC DNA]</scope>
    <source>
        <strain>ATCC 204508 / S288c</strain>
    </source>
</reference>
<reference key="2">
    <citation type="journal article" date="2014" name="G3 (Bethesda)">
        <title>The reference genome sequence of Saccharomyces cerevisiae: Then and now.</title>
        <authorList>
            <person name="Engel S.R."/>
            <person name="Dietrich F.S."/>
            <person name="Fisk D.G."/>
            <person name="Binkley G."/>
            <person name="Balakrishnan R."/>
            <person name="Costanzo M.C."/>
            <person name="Dwight S.S."/>
            <person name="Hitz B.C."/>
            <person name="Karra K."/>
            <person name="Nash R.S."/>
            <person name="Weng S."/>
            <person name="Wong E.D."/>
            <person name="Lloyd P."/>
            <person name="Skrzypek M.S."/>
            <person name="Miyasato S.R."/>
            <person name="Simison M."/>
            <person name="Cherry J.M."/>
        </authorList>
    </citation>
    <scope>GENOME REANNOTATION</scope>
    <source>
        <strain>ATCC 204508 / S288c</strain>
    </source>
</reference>
<reference key="3">
    <citation type="journal article" date="1998" name="Science">
        <title>Mass spectrometric analysis of the anaphase-promoting complex from yeast: identification of a subunit related to cullins.</title>
        <authorList>
            <person name="Zachariae W."/>
            <person name="Shevchenko A."/>
            <person name="Andrews P.D."/>
            <person name="Ciosk R."/>
            <person name="Galova M."/>
            <person name="Stark M.J."/>
            <person name="Mann M."/>
            <person name="Nasmyth K."/>
        </authorList>
    </citation>
    <scope>IDENTIFICATION BY MASS SPECTROMETRY</scope>
    <scope>SUBUNIT</scope>
</reference>
<reference key="4">
    <citation type="journal article" date="2000" name="Mol. Biol. Cell">
        <title>The APC11 RING-H2 finger mediates E2-dependent ubiquitination.</title>
        <authorList>
            <person name="Leverson J.D."/>
            <person name="Joazeiro C.A."/>
            <person name="Page A.M."/>
            <person name="Huang H."/>
            <person name="Hieter P."/>
            <person name="Hunter T."/>
        </authorList>
    </citation>
    <scope>FUNCTION</scope>
    <scope>MUTAGENESIS OF SER-10; CYS-41; CYS-44; TRP-81 AND CYS-91</scope>
</reference>
<reference key="5">
    <citation type="journal article" date="2003" name="Nature">
        <title>Global analysis of protein expression in yeast.</title>
        <authorList>
            <person name="Ghaemmaghami S."/>
            <person name="Huh W.-K."/>
            <person name="Bower K."/>
            <person name="Howson R.W."/>
            <person name="Belle A."/>
            <person name="Dephoure N."/>
            <person name="O'Shea E.K."/>
            <person name="Weissman J.S."/>
        </authorList>
    </citation>
    <scope>LEVEL OF PROTEIN EXPRESSION [LARGE SCALE ANALYSIS]</scope>
</reference>
<name>APC11_YEAST</name>
<dbReference type="EC" id="6.3.2.-"/>
<dbReference type="EMBL" id="Z74056">
    <property type="protein sequence ID" value="CAA98564.1"/>
    <property type="molecule type" value="Genomic_DNA"/>
</dbReference>
<dbReference type="EMBL" id="Z48432">
    <property type="protein sequence ID" value="CAA88351.1"/>
    <property type="molecule type" value="Genomic_DNA"/>
</dbReference>
<dbReference type="EMBL" id="BK006938">
    <property type="protein sequence ID" value="DAA11839.1"/>
    <property type="molecule type" value="Genomic_DNA"/>
</dbReference>
<dbReference type="PIR" id="S52511">
    <property type="entry name" value="S52511"/>
</dbReference>
<dbReference type="RefSeq" id="NP_010276.3">
    <property type="nucleotide sequence ID" value="NM_001180067.3"/>
</dbReference>
<dbReference type="PDB" id="8A3T">
    <property type="method" value="EM"/>
    <property type="resolution" value="3.50 A"/>
    <property type="chains" value="U=1-165"/>
</dbReference>
<dbReference type="PDB" id="8A5Y">
    <property type="method" value="EM"/>
    <property type="resolution" value="4.90 A"/>
    <property type="chains" value="U=1-165"/>
</dbReference>
<dbReference type="PDB" id="8A61">
    <property type="method" value="EM"/>
    <property type="resolution" value="5.40 A"/>
    <property type="chains" value="U=1-165"/>
</dbReference>
<dbReference type="PDBsum" id="8A3T"/>
<dbReference type="PDBsum" id="8A5Y"/>
<dbReference type="PDBsum" id="8A61"/>
<dbReference type="EMDB" id="EMD-15123"/>
<dbReference type="EMDB" id="EMD-15199"/>
<dbReference type="EMDB" id="EMD-15201"/>
<dbReference type="SMR" id="Q12157"/>
<dbReference type="BioGRID" id="32044">
    <property type="interactions" value="690"/>
</dbReference>
<dbReference type="ComplexPortal" id="CPX-756">
    <property type="entry name" value="Anaphase-Promoting core complex"/>
</dbReference>
<dbReference type="ComplexPortal" id="CPX-760">
    <property type="entry name" value="Anaphase-Promoting Complex, CDC20 variant"/>
</dbReference>
<dbReference type="ComplexPortal" id="CPX-761">
    <property type="entry name" value="Anaphase-Promoting Complex, CDH1 variant"/>
</dbReference>
<dbReference type="ComplexPortal" id="CPX-762">
    <property type="entry name" value="Anaphase-Promoting complex AMA1 variant"/>
</dbReference>
<dbReference type="DIP" id="DIP-1130N"/>
<dbReference type="FunCoup" id="Q12157">
    <property type="interactions" value="401"/>
</dbReference>
<dbReference type="IntAct" id="Q12157">
    <property type="interactions" value="17"/>
</dbReference>
<dbReference type="MINT" id="Q12157"/>
<dbReference type="STRING" id="4932.YDL008W"/>
<dbReference type="iPTMnet" id="Q12157"/>
<dbReference type="PaxDb" id="4932-YDL008W"/>
<dbReference type="PeptideAtlas" id="Q12157"/>
<dbReference type="EnsemblFungi" id="YDL008W_mRNA">
    <property type="protein sequence ID" value="YDL008W"/>
    <property type="gene ID" value="YDL008W"/>
</dbReference>
<dbReference type="GeneID" id="851554"/>
<dbReference type="KEGG" id="sce:YDL008W"/>
<dbReference type="AGR" id="SGD:S000002166"/>
<dbReference type="SGD" id="S000002166">
    <property type="gene designation" value="APC11"/>
</dbReference>
<dbReference type="VEuPathDB" id="FungiDB:YDL008W"/>
<dbReference type="eggNOG" id="KOG1493">
    <property type="taxonomic scope" value="Eukaryota"/>
</dbReference>
<dbReference type="GeneTree" id="ENSGT00550000075186"/>
<dbReference type="HOGENOM" id="CLU_115512_0_0_1"/>
<dbReference type="InParanoid" id="Q12157"/>
<dbReference type="OMA" id="FHVHCIY"/>
<dbReference type="OrthoDB" id="1681166at2759"/>
<dbReference type="BioCyc" id="YEAST:G3O-29439-MONOMER"/>
<dbReference type="Reactome" id="R-SCE-983168">
    <property type="pathway name" value="Antigen processing: Ubiquitination &amp; Proteasome degradation"/>
</dbReference>
<dbReference type="UniPathway" id="UPA00143"/>
<dbReference type="BioGRID-ORCS" id="851554">
    <property type="hits" value="10 hits in 10 CRISPR screens"/>
</dbReference>
<dbReference type="PRO" id="PR:Q12157"/>
<dbReference type="Proteomes" id="UP000002311">
    <property type="component" value="Chromosome IV"/>
</dbReference>
<dbReference type="RNAct" id="Q12157">
    <property type="molecule type" value="protein"/>
</dbReference>
<dbReference type="GO" id="GO:0005680">
    <property type="term" value="C:anaphase-promoting complex"/>
    <property type="evidence" value="ECO:0000314"/>
    <property type="project" value="SGD"/>
</dbReference>
<dbReference type="GO" id="GO:0005634">
    <property type="term" value="C:nucleus"/>
    <property type="evidence" value="ECO:0000318"/>
    <property type="project" value="GO_Central"/>
</dbReference>
<dbReference type="GO" id="GO:0097602">
    <property type="term" value="F:cullin family protein binding"/>
    <property type="evidence" value="ECO:0000318"/>
    <property type="project" value="GO_Central"/>
</dbReference>
<dbReference type="GO" id="GO:0016874">
    <property type="term" value="F:ligase activity"/>
    <property type="evidence" value="ECO:0007669"/>
    <property type="project" value="UniProtKB-KW"/>
</dbReference>
<dbReference type="GO" id="GO:0061630">
    <property type="term" value="F:ubiquitin protein ligase activity"/>
    <property type="evidence" value="ECO:0000314"/>
    <property type="project" value="SGD"/>
</dbReference>
<dbReference type="GO" id="GO:0008270">
    <property type="term" value="F:zinc ion binding"/>
    <property type="evidence" value="ECO:0007669"/>
    <property type="project" value="UniProtKB-KW"/>
</dbReference>
<dbReference type="GO" id="GO:0031145">
    <property type="term" value="P:anaphase-promoting complex-dependent catabolic process"/>
    <property type="evidence" value="ECO:0000314"/>
    <property type="project" value="ComplexPortal"/>
</dbReference>
<dbReference type="GO" id="GO:0051301">
    <property type="term" value="P:cell division"/>
    <property type="evidence" value="ECO:0007669"/>
    <property type="project" value="UniProtKB-KW"/>
</dbReference>
<dbReference type="GO" id="GO:0045842">
    <property type="term" value="P:positive regulation of mitotic metaphase/anaphase transition"/>
    <property type="evidence" value="ECO:0000318"/>
    <property type="project" value="GO_Central"/>
</dbReference>
<dbReference type="GO" id="GO:0016567">
    <property type="term" value="P:protein ubiquitination"/>
    <property type="evidence" value="ECO:0000314"/>
    <property type="project" value="ComplexPortal"/>
</dbReference>
<dbReference type="GO" id="GO:0051445">
    <property type="term" value="P:regulation of meiotic cell cycle"/>
    <property type="evidence" value="ECO:0000303"/>
    <property type="project" value="ComplexPortal"/>
</dbReference>
<dbReference type="GO" id="GO:0007346">
    <property type="term" value="P:regulation of mitotic cell cycle"/>
    <property type="evidence" value="ECO:0000303"/>
    <property type="project" value="ComplexPortal"/>
</dbReference>
<dbReference type="GO" id="GO:0006511">
    <property type="term" value="P:ubiquitin-dependent protein catabolic process"/>
    <property type="evidence" value="ECO:0000318"/>
    <property type="project" value="GO_Central"/>
</dbReference>
<dbReference type="CDD" id="cd16456">
    <property type="entry name" value="RING-H2_APC11"/>
    <property type="match status" value="1"/>
</dbReference>
<dbReference type="FunFam" id="3.30.40.10:FF:000469">
    <property type="entry name" value="Anaphase-promoting complex subunit 11"/>
    <property type="match status" value="1"/>
</dbReference>
<dbReference type="Gene3D" id="3.30.40.10">
    <property type="entry name" value="Zinc/RING finger domain, C3HC4 (zinc finger)"/>
    <property type="match status" value="1"/>
</dbReference>
<dbReference type="InterPro" id="IPR051031">
    <property type="entry name" value="RING-box_E3_Ubiquitin_Ligase"/>
</dbReference>
<dbReference type="InterPro" id="IPR024991">
    <property type="entry name" value="RING-H2_APC11"/>
</dbReference>
<dbReference type="InterPro" id="IPR001841">
    <property type="entry name" value="Znf_RING"/>
</dbReference>
<dbReference type="InterPro" id="IPR013083">
    <property type="entry name" value="Znf_RING/FYVE/PHD"/>
</dbReference>
<dbReference type="PANTHER" id="PTHR11210">
    <property type="entry name" value="RING BOX"/>
    <property type="match status" value="1"/>
</dbReference>
<dbReference type="Pfam" id="PF12861">
    <property type="entry name" value="zf-ANAPC11"/>
    <property type="match status" value="1"/>
</dbReference>
<dbReference type="SUPFAM" id="SSF57850">
    <property type="entry name" value="RING/U-box"/>
    <property type="match status" value="1"/>
</dbReference>
<dbReference type="PROSITE" id="PS50089">
    <property type="entry name" value="ZF_RING_2"/>
    <property type="match status" value="1"/>
</dbReference>
<sequence>MKVKINEVHSVFAWSWHIPSTSDEDAANNDPIGNDEDEDVCGICRASYNGTCPSCKFPGDQCPLVIGLCHHNFHDHCIYRWLDTPTSKGLCPMCRQTFQLQKGLAINDAHVQKFVEIVSRRREEMIEEGVAEEFVDFDEPIRQNTDNPIGRQQVDTILDEDFLLR</sequence>